<accession>Q09826</accession>
<keyword id="KW-0129">CBS domain</keyword>
<keyword id="KW-0963">Cytoplasm</keyword>
<keyword id="KW-0539">Nucleus</keyword>
<keyword id="KW-0597">Phosphoprotein</keyword>
<keyword id="KW-1185">Reference proteome</keyword>
<keyword id="KW-0677">Repeat</keyword>
<sequence length="408" mass="44288">MPLSTQSSDSLSSAGRQSFGVNSVSDFLAQFPIPTNLPSNKWQDIPVTFLHDNEIALIDPETSMEEASSILIDRDLSALPIVAAKGSNEIATTFDYADLNSFLLMVVGFDDFNDGRFKKVAEDIRAGKVITAYEVAKLGKNKDDFITIPHTTSLGRLAEILSSGIRRVAVTNEQGELSFMASQRSIIRFLWNNIRAFPDLEPLMSRTIHSLDIGSTDITCISGDQKVAAALRQMNQTGIGSLAVVDAQFRLLGNISLVDVKYVTRSSSVYLLNKSCAHFLSVIKSEQGIRAGKDSAPAFNIYESSTFAFTLAKLVATQCHRLWLVQSPSCPPSPKNNAHLSPGSMGGVKVNQLLGVVSLTDIISVLYAHMKGTLPPAPHSAPSLRHGRRGSTSSHRSHSKASVDTQRR</sequence>
<protein>
    <recommendedName>
        <fullName>Protein sds23/moc1</fullName>
    </recommendedName>
    <alternativeName>
        <fullName>Multicopy suppressor of overexpressed cyr1 protein 1</fullName>
    </alternativeName>
    <alternativeName>
        <fullName>Phosphoprotein at stationary phase 1 protein</fullName>
    </alternativeName>
</protein>
<gene>
    <name type="primary">sds23</name>
    <name type="synonym">moc1</name>
    <name type="synonym">psp1</name>
    <name type="ORF">SPBC646.13</name>
</gene>
<comment type="function">
    <text evidence="3 6">Required for normal DNA replication and for proper mitosis. Induces sexual development and ascus formation.</text>
</comment>
<comment type="interaction">
    <interactant intactId="EBI-7169035">
        <id>Q09826</id>
    </interactant>
    <interactant intactId="EBI-696304">
        <id>Q10281</id>
        <label>cpc2</label>
    </interactant>
    <organismsDiffer>false</organismsDiffer>
    <experiments>3</experiments>
</comment>
<comment type="subcellular location">
    <subcellularLocation>
        <location evidence="4 6">Cytoplasm</location>
    </subcellularLocation>
    <subcellularLocation>
        <location evidence="4 6">Nucleus</location>
    </subcellularLocation>
</comment>
<comment type="PTM">
    <text evidence="5 6">Phosphorylated during the stationary phase of the cell cycle.</text>
</comment>
<comment type="similarity">
    <text evidence="7">Belongs to the SDS23 family.</text>
</comment>
<dbReference type="EMBL" id="D86840">
    <property type="protein sequence ID" value="BAA13172.1"/>
    <property type="molecule type" value="Genomic_DNA"/>
</dbReference>
<dbReference type="EMBL" id="D87870">
    <property type="protein sequence ID" value="BAA13486.1"/>
    <property type="molecule type" value="mRNA"/>
</dbReference>
<dbReference type="EMBL" id="L36906">
    <property type="status" value="NOT_ANNOTATED_CDS"/>
    <property type="molecule type" value="Genomic_DNA"/>
</dbReference>
<dbReference type="EMBL" id="CU329671">
    <property type="protein sequence ID" value="CAA22817.1"/>
    <property type="molecule type" value="Genomic_DNA"/>
</dbReference>
<dbReference type="PIR" id="T43240">
    <property type="entry name" value="T43240"/>
</dbReference>
<dbReference type="RefSeq" id="NP_595371.1">
    <property type="nucleotide sequence ID" value="NM_001021279.2"/>
</dbReference>
<dbReference type="SMR" id="Q09826"/>
<dbReference type="BioGRID" id="277632">
    <property type="interactions" value="160"/>
</dbReference>
<dbReference type="FunCoup" id="Q09826">
    <property type="interactions" value="31"/>
</dbReference>
<dbReference type="IntAct" id="Q09826">
    <property type="interactions" value="33"/>
</dbReference>
<dbReference type="MINT" id="Q09826"/>
<dbReference type="STRING" id="284812.Q09826"/>
<dbReference type="iPTMnet" id="Q09826"/>
<dbReference type="PaxDb" id="4896-SPBC646.13.1"/>
<dbReference type="EnsemblFungi" id="SPBC646.13.1">
    <property type="protein sequence ID" value="SPBC646.13.1:pep"/>
    <property type="gene ID" value="SPBC646.13"/>
</dbReference>
<dbReference type="PomBase" id="SPBC646.13">
    <property type="gene designation" value="sds23"/>
</dbReference>
<dbReference type="VEuPathDB" id="FungiDB:SPBC646.13"/>
<dbReference type="eggNOG" id="KOG1764">
    <property type="taxonomic scope" value="Eukaryota"/>
</dbReference>
<dbReference type="HOGENOM" id="CLU_024459_1_1_1"/>
<dbReference type="InParanoid" id="Q09826"/>
<dbReference type="OMA" id="DWTQISI"/>
<dbReference type="PhylomeDB" id="Q09826"/>
<dbReference type="PRO" id="PR:Q09826"/>
<dbReference type="Proteomes" id="UP000002485">
    <property type="component" value="Chromosome II"/>
</dbReference>
<dbReference type="GO" id="GO:0051286">
    <property type="term" value="C:cell tip"/>
    <property type="evidence" value="ECO:0000314"/>
    <property type="project" value="PomBase"/>
</dbReference>
<dbReference type="GO" id="GO:0005829">
    <property type="term" value="C:cytosol"/>
    <property type="evidence" value="ECO:0000314"/>
    <property type="project" value="PomBase"/>
</dbReference>
<dbReference type="GO" id="GO:0005634">
    <property type="term" value="C:nucleus"/>
    <property type="evidence" value="ECO:0000314"/>
    <property type="project" value="PomBase"/>
</dbReference>
<dbReference type="GO" id="GO:0004865">
    <property type="term" value="F:protein serine/threonine phosphatase inhibitor activity"/>
    <property type="evidence" value="ECO:0000314"/>
    <property type="project" value="PomBase"/>
</dbReference>
<dbReference type="GO" id="GO:0042149">
    <property type="term" value="P:cellular response to glucose starvation"/>
    <property type="evidence" value="ECO:0000315"/>
    <property type="project" value="PomBase"/>
</dbReference>
<dbReference type="GO" id="GO:2001211">
    <property type="term" value="P:negative regulation of isopentenyl diphosphate biosynthetic process, mevalonate pathway"/>
    <property type="evidence" value="ECO:0000315"/>
    <property type="project" value="PomBase"/>
</dbReference>
<dbReference type="GO" id="GO:0031139">
    <property type="term" value="P:positive regulation of conjugation with cellular fusion"/>
    <property type="evidence" value="ECO:0000315"/>
    <property type="project" value="PomBase"/>
</dbReference>
<dbReference type="GO" id="GO:1900735">
    <property type="term" value="P:positive regulation of flocculation"/>
    <property type="evidence" value="ECO:0000316"/>
    <property type="project" value="PomBase"/>
</dbReference>
<dbReference type="GO" id="GO:0045842">
    <property type="term" value="P:positive regulation of mitotic metaphase/anaphase transition"/>
    <property type="evidence" value="ECO:0000315"/>
    <property type="project" value="PomBase"/>
</dbReference>
<dbReference type="GO" id="GO:1902472">
    <property type="term" value="P:regulation of mitotic cytokinesis, division site positioning"/>
    <property type="evidence" value="ECO:0000315"/>
    <property type="project" value="PomBase"/>
</dbReference>
<dbReference type="GO" id="GO:0023052">
    <property type="term" value="P:signaling"/>
    <property type="evidence" value="ECO:0000303"/>
    <property type="project" value="PomBase"/>
</dbReference>
<dbReference type="CDD" id="cd02205">
    <property type="entry name" value="CBS_pair_SF"/>
    <property type="match status" value="1"/>
</dbReference>
<dbReference type="FunFam" id="3.10.580.10:FF:000035">
    <property type="entry name" value="Protein SDS23"/>
    <property type="match status" value="1"/>
</dbReference>
<dbReference type="FunFam" id="3.10.580.10:FF:000043">
    <property type="entry name" value="Sds23p"/>
    <property type="match status" value="1"/>
</dbReference>
<dbReference type="Gene3D" id="3.10.580.10">
    <property type="entry name" value="CBS-domain"/>
    <property type="match status" value="2"/>
</dbReference>
<dbReference type="InterPro" id="IPR050511">
    <property type="entry name" value="AMPK_gamma/SDS23_families"/>
</dbReference>
<dbReference type="InterPro" id="IPR000644">
    <property type="entry name" value="CBS_dom"/>
</dbReference>
<dbReference type="InterPro" id="IPR046342">
    <property type="entry name" value="CBS_dom_sf"/>
</dbReference>
<dbReference type="InterPro" id="IPR016711">
    <property type="entry name" value="Ssd23"/>
</dbReference>
<dbReference type="PANTHER" id="PTHR13780">
    <property type="entry name" value="AMP-ACTIVATED PROTEIN KINASE, GAMMA REGULATORY SUBUNIT"/>
    <property type="match status" value="1"/>
</dbReference>
<dbReference type="PANTHER" id="PTHR13780:SF36">
    <property type="entry name" value="CBS DOMAIN-CONTAINING PROTEIN"/>
    <property type="match status" value="1"/>
</dbReference>
<dbReference type="Pfam" id="PF00571">
    <property type="entry name" value="CBS"/>
    <property type="match status" value="2"/>
</dbReference>
<dbReference type="PIRSF" id="PIRSF018148">
    <property type="entry name" value="UCP018148_CBS_YBR214w"/>
    <property type="match status" value="1"/>
</dbReference>
<dbReference type="SMART" id="SM00116">
    <property type="entry name" value="CBS"/>
    <property type="match status" value="4"/>
</dbReference>
<dbReference type="SUPFAM" id="SSF54631">
    <property type="entry name" value="CBS-domain pair"/>
    <property type="match status" value="2"/>
</dbReference>
<dbReference type="PROSITE" id="PS51371">
    <property type="entry name" value="CBS"/>
    <property type="match status" value="3"/>
</dbReference>
<organism>
    <name type="scientific">Schizosaccharomyces pombe (strain 972 / ATCC 24843)</name>
    <name type="common">Fission yeast</name>
    <dbReference type="NCBI Taxonomy" id="284812"/>
    <lineage>
        <taxon>Eukaryota</taxon>
        <taxon>Fungi</taxon>
        <taxon>Dikarya</taxon>
        <taxon>Ascomycota</taxon>
        <taxon>Taphrinomycotina</taxon>
        <taxon>Schizosaccharomycetes</taxon>
        <taxon>Schizosaccharomycetales</taxon>
        <taxon>Schizosaccharomycetaceae</taxon>
        <taxon>Schizosaccharomyces</taxon>
    </lineage>
</organism>
<proteinExistence type="evidence at protein level"/>
<evidence type="ECO:0000255" key="1">
    <source>
        <dbReference type="PROSITE-ProRule" id="PRU00703"/>
    </source>
</evidence>
<evidence type="ECO:0000256" key="2">
    <source>
        <dbReference type="SAM" id="MobiDB-lite"/>
    </source>
</evidence>
<evidence type="ECO:0000269" key="3">
    <source>
    </source>
</evidence>
<evidence type="ECO:0000269" key="4">
    <source>
    </source>
</evidence>
<evidence type="ECO:0000269" key="5">
    <source>
    </source>
</evidence>
<evidence type="ECO:0000269" key="6">
    <source>
    </source>
</evidence>
<evidence type="ECO:0000305" key="7"/>
<feature type="chain" id="PRO_0000097651" description="Protein sds23/moc1">
    <location>
        <begin position="1"/>
        <end position="408"/>
    </location>
</feature>
<feature type="domain" description="CBS 1" evidence="1">
    <location>
        <begin position="51"/>
        <end position="112"/>
    </location>
</feature>
<feature type="domain" description="CBS 2" evidence="1">
    <location>
        <begin position="140"/>
        <end position="197"/>
    </location>
</feature>
<feature type="domain" description="CBS 3" evidence="1">
    <location>
        <begin position="214"/>
        <end position="271"/>
    </location>
</feature>
<feature type="domain" description="CBS 4" evidence="1">
    <location>
        <begin position="297"/>
        <end position="362"/>
    </location>
</feature>
<feature type="region of interest" description="Disordered" evidence="2">
    <location>
        <begin position="376"/>
        <end position="408"/>
    </location>
</feature>
<feature type="compositionally biased region" description="Basic residues" evidence="2">
    <location>
        <begin position="385"/>
        <end position="399"/>
    </location>
</feature>
<feature type="modified residue" description="Phosphoserine" evidence="5">
    <location>
        <position position="77"/>
    </location>
</feature>
<feature type="modified residue" description="Phosphoserine" evidence="5">
    <location>
        <position position="329"/>
    </location>
</feature>
<feature type="modified residue" description="Phosphoserine; by CDC2" evidence="5 6">
    <location>
        <position position="333"/>
    </location>
</feature>
<feature type="modified residue" description="Phosphoserine" evidence="5">
    <location>
        <position position="341"/>
    </location>
</feature>
<feature type="mutagenesis site" description="No phosphorylation." evidence="6">
    <original>S</original>
    <variation>A</variation>
    <location>
        <position position="333"/>
    </location>
</feature>
<name>SDS23_SCHPO</name>
<reference key="1">
    <citation type="journal article" date="1996" name="EMBO J.">
        <title>Requirement for PP1 phosphatase and 20S cyclosome/APC for the onset of anaphase is lessened by the dosage increase of a novel gene sds23+.</title>
        <authorList>
            <person name="Ishii K."/>
            <person name="Kumada K."/>
            <person name="Toda T."/>
            <person name="Yanagida M."/>
        </authorList>
    </citation>
    <scope>NUCLEOTIDE SEQUENCE [GENOMIC DNA]</scope>
</reference>
<reference key="2">
    <citation type="submission" date="1996-09" db="EMBL/GenBank/DDBJ databases">
        <authorList>
            <person name="Kawamukai M."/>
            <person name="Adachi Y."/>
            <person name="Fukuda T."/>
            <person name="Nakagawa T."/>
            <person name="Matsuda H."/>
        </authorList>
    </citation>
    <scope>NUCLEOTIDE SEQUENCE [MRNA]</scope>
</reference>
<reference key="3">
    <citation type="journal article" date="1997" name="J. Biol. Chem.">
        <title>A novel protein, Psp1, essential for cell cycle progression of Schizosaccharomyces pombe is phosphorylated by Cdc2-Cdc13 upon entry into G0-like stationary phase of cell growth.</title>
        <authorList>
            <person name="Jang Y.-J."/>
            <person name="Won M."/>
            <person name="Chung K.-S."/>
            <person name="Kim D.-U."/>
            <person name="Hoe K.-L."/>
            <person name="Park C."/>
            <person name="Yoo H.-S."/>
        </authorList>
    </citation>
    <scope>NUCLEOTIDE SEQUENCE [GENOMIC DNA]</scope>
    <scope>FUNCTION</scope>
    <scope>SUBCELLULAR LOCATION</scope>
    <scope>PHOSPHORYLATION AT SER-333</scope>
    <scope>MUTAGENESIS OF SER-333</scope>
</reference>
<reference key="4">
    <citation type="journal article" date="2005" name="Curr. Genet.">
        <title>Moc3, a novel Zn finger type protein involved in sexual development, ascus formation, and stress response of Schizosaccharomyces pombe.</title>
        <authorList>
            <person name="Goldar M.M."/>
            <person name="Jeong H.T."/>
            <person name="Tanaka K."/>
            <person name="Matsuda H."/>
            <person name="Kawamukai M."/>
        </authorList>
    </citation>
    <scope>NUCLEOTIDE SEQUENCE [GENOMIC DNA]</scope>
    <scope>FUNCTION</scope>
</reference>
<reference key="5">
    <citation type="journal article" date="2002" name="Nature">
        <title>The genome sequence of Schizosaccharomyces pombe.</title>
        <authorList>
            <person name="Wood V."/>
            <person name="Gwilliam R."/>
            <person name="Rajandream M.A."/>
            <person name="Lyne M.H."/>
            <person name="Lyne R."/>
            <person name="Stewart A."/>
            <person name="Sgouros J.G."/>
            <person name="Peat N."/>
            <person name="Hayles J."/>
            <person name="Baker S.G."/>
            <person name="Basham D."/>
            <person name="Bowman S."/>
            <person name="Brooks K."/>
            <person name="Brown D."/>
            <person name="Brown S."/>
            <person name="Chillingworth T."/>
            <person name="Churcher C.M."/>
            <person name="Collins M."/>
            <person name="Connor R."/>
            <person name="Cronin A."/>
            <person name="Davis P."/>
            <person name="Feltwell T."/>
            <person name="Fraser A."/>
            <person name="Gentles S."/>
            <person name="Goble A."/>
            <person name="Hamlin N."/>
            <person name="Harris D.E."/>
            <person name="Hidalgo J."/>
            <person name="Hodgson G."/>
            <person name="Holroyd S."/>
            <person name="Hornsby T."/>
            <person name="Howarth S."/>
            <person name="Huckle E.J."/>
            <person name="Hunt S."/>
            <person name="Jagels K."/>
            <person name="James K.D."/>
            <person name="Jones L."/>
            <person name="Jones M."/>
            <person name="Leather S."/>
            <person name="McDonald S."/>
            <person name="McLean J."/>
            <person name="Mooney P."/>
            <person name="Moule S."/>
            <person name="Mungall K.L."/>
            <person name="Murphy L.D."/>
            <person name="Niblett D."/>
            <person name="Odell C."/>
            <person name="Oliver K."/>
            <person name="O'Neil S."/>
            <person name="Pearson D."/>
            <person name="Quail M.A."/>
            <person name="Rabbinowitsch E."/>
            <person name="Rutherford K.M."/>
            <person name="Rutter S."/>
            <person name="Saunders D."/>
            <person name="Seeger K."/>
            <person name="Sharp S."/>
            <person name="Skelton J."/>
            <person name="Simmonds M.N."/>
            <person name="Squares R."/>
            <person name="Squares S."/>
            <person name="Stevens K."/>
            <person name="Taylor K."/>
            <person name="Taylor R.G."/>
            <person name="Tivey A."/>
            <person name="Walsh S.V."/>
            <person name="Warren T."/>
            <person name="Whitehead S."/>
            <person name="Woodward J.R."/>
            <person name="Volckaert G."/>
            <person name="Aert R."/>
            <person name="Robben J."/>
            <person name="Grymonprez B."/>
            <person name="Weltjens I."/>
            <person name="Vanstreels E."/>
            <person name="Rieger M."/>
            <person name="Schaefer M."/>
            <person name="Mueller-Auer S."/>
            <person name="Gabel C."/>
            <person name="Fuchs M."/>
            <person name="Duesterhoeft A."/>
            <person name="Fritzc C."/>
            <person name="Holzer E."/>
            <person name="Moestl D."/>
            <person name="Hilbert H."/>
            <person name="Borzym K."/>
            <person name="Langer I."/>
            <person name="Beck A."/>
            <person name="Lehrach H."/>
            <person name="Reinhardt R."/>
            <person name="Pohl T.M."/>
            <person name="Eger P."/>
            <person name="Zimmermann W."/>
            <person name="Wedler H."/>
            <person name="Wambutt R."/>
            <person name="Purnelle B."/>
            <person name="Goffeau A."/>
            <person name="Cadieu E."/>
            <person name="Dreano S."/>
            <person name="Gloux S."/>
            <person name="Lelaure V."/>
            <person name="Mottier S."/>
            <person name="Galibert F."/>
            <person name="Aves S.J."/>
            <person name="Xiang Z."/>
            <person name="Hunt C."/>
            <person name="Moore K."/>
            <person name="Hurst S.M."/>
            <person name="Lucas M."/>
            <person name="Rochet M."/>
            <person name="Gaillardin C."/>
            <person name="Tallada V.A."/>
            <person name="Garzon A."/>
            <person name="Thode G."/>
            <person name="Daga R.R."/>
            <person name="Cruzado L."/>
            <person name="Jimenez J."/>
            <person name="Sanchez M."/>
            <person name="del Rey F."/>
            <person name="Benito J."/>
            <person name="Dominguez A."/>
            <person name="Revuelta J.L."/>
            <person name="Moreno S."/>
            <person name="Armstrong J."/>
            <person name="Forsburg S.L."/>
            <person name="Cerutti L."/>
            <person name="Lowe T."/>
            <person name="McCombie W.R."/>
            <person name="Paulsen I."/>
            <person name="Potashkin J."/>
            <person name="Shpakovski G.V."/>
            <person name="Ussery D."/>
            <person name="Barrell B.G."/>
            <person name="Nurse P."/>
        </authorList>
    </citation>
    <scope>NUCLEOTIDE SEQUENCE [LARGE SCALE GENOMIC DNA]</scope>
    <source>
        <strain>972 / ATCC 24843</strain>
    </source>
</reference>
<reference key="6">
    <citation type="journal article" date="2006" name="Nat. Biotechnol.">
        <title>ORFeome cloning and global analysis of protein localization in the fission yeast Schizosaccharomyces pombe.</title>
        <authorList>
            <person name="Matsuyama A."/>
            <person name="Arai R."/>
            <person name="Yashiroda Y."/>
            <person name="Shirai A."/>
            <person name="Kamata A."/>
            <person name="Sekido S."/>
            <person name="Kobayashi Y."/>
            <person name="Hashimoto A."/>
            <person name="Hamamoto M."/>
            <person name="Hiraoka Y."/>
            <person name="Horinouchi S."/>
            <person name="Yoshida M."/>
        </authorList>
    </citation>
    <scope>SUBCELLULAR LOCATION [LARGE SCALE ANALYSIS]</scope>
</reference>
<reference key="7">
    <citation type="journal article" date="2008" name="J. Proteome Res.">
        <title>Phosphoproteome analysis of fission yeast.</title>
        <authorList>
            <person name="Wilson-Grady J.T."/>
            <person name="Villen J."/>
            <person name="Gygi S.P."/>
        </authorList>
    </citation>
    <scope>PHOSPHORYLATION [LARGE SCALE ANALYSIS] AT SER-77; SER-329; SER-333 AND SER-341</scope>
    <scope>IDENTIFICATION BY MASS SPECTROMETRY</scope>
</reference>